<gene>
    <name type="primary">ftsK</name>
    <name type="ordered locus">RC1274</name>
</gene>
<evidence type="ECO:0000250" key="1"/>
<evidence type="ECO:0000255" key="2"/>
<evidence type="ECO:0000255" key="3">
    <source>
        <dbReference type="PROSITE-ProRule" id="PRU00289"/>
    </source>
</evidence>
<evidence type="ECO:0000305" key="4"/>
<proteinExistence type="inferred from homology"/>
<keyword id="KW-0067">ATP-binding</keyword>
<keyword id="KW-0131">Cell cycle</keyword>
<keyword id="KW-0132">Cell division</keyword>
<keyword id="KW-0997">Cell inner membrane</keyword>
<keyword id="KW-1003">Cell membrane</keyword>
<keyword id="KW-0159">Chromosome partition</keyword>
<keyword id="KW-0238">DNA-binding</keyword>
<keyword id="KW-0472">Membrane</keyword>
<keyword id="KW-0547">Nucleotide-binding</keyword>
<keyword id="KW-0812">Transmembrane</keyword>
<keyword id="KW-1133">Transmembrane helix</keyword>
<feature type="chain" id="PRO_0000098286" description="DNA translocase FtsK">
    <location>
        <begin position="1"/>
        <end position="744"/>
    </location>
</feature>
<feature type="transmembrane region" description="Helical" evidence="2">
    <location>
        <begin position="15"/>
        <end position="35"/>
    </location>
</feature>
<feature type="transmembrane region" description="Helical" evidence="2">
    <location>
        <begin position="62"/>
        <end position="82"/>
    </location>
</feature>
<feature type="transmembrane region" description="Helical" evidence="2">
    <location>
        <begin position="92"/>
        <end position="112"/>
    </location>
</feature>
<feature type="transmembrane region" description="Helical" evidence="2">
    <location>
        <begin position="116"/>
        <end position="136"/>
    </location>
</feature>
<feature type="transmembrane region" description="Helical" evidence="2">
    <location>
        <begin position="142"/>
        <end position="162"/>
    </location>
</feature>
<feature type="topological domain" description="Cytoplasmic" evidence="2">
    <location>
        <begin position="163"/>
        <end position="744"/>
    </location>
</feature>
<feature type="domain" description="FtsK" evidence="3">
    <location>
        <begin position="386"/>
        <end position="605"/>
    </location>
</feature>
<feature type="binding site" evidence="3">
    <location>
        <begin position="406"/>
        <end position="411"/>
    </location>
    <ligand>
        <name>ATP</name>
        <dbReference type="ChEBI" id="CHEBI:30616"/>
    </ligand>
</feature>
<protein>
    <recommendedName>
        <fullName>DNA translocase FtsK</fullName>
    </recommendedName>
</protein>
<organism>
    <name type="scientific">Rickettsia conorii (strain ATCC VR-613 / Malish 7)</name>
    <dbReference type="NCBI Taxonomy" id="272944"/>
    <lineage>
        <taxon>Bacteria</taxon>
        <taxon>Pseudomonadati</taxon>
        <taxon>Pseudomonadota</taxon>
        <taxon>Alphaproteobacteria</taxon>
        <taxon>Rickettsiales</taxon>
        <taxon>Rickettsiaceae</taxon>
        <taxon>Rickettsieae</taxon>
        <taxon>Rickettsia</taxon>
        <taxon>spotted fever group</taxon>
    </lineage>
</organism>
<name>FTSK_RICCN</name>
<comment type="function">
    <text evidence="1">Essential cell division protein that coordinates cell division and chromosome segregation. The N-terminus is involved in assembly of the cell-division machinery. The C-terminus functions as a DNA motor that moves dsDNA in an ATP-dependent manner towards the dif recombination site, which is located within the replication terminus region. Translocation stops specifically at Xer-dif sites, where FtsK interacts with the Xer recombinase, allowing activation of chromosome unlinking by recombination. FtsK orienting polar sequences (KOPS) guide the direction of DNA translocation. FtsK can remove proteins from DNA as it translocates, but translocation stops specifically at XerCD-dif site, thereby preventing removal of XerC and XerD from dif (By similarity).</text>
</comment>
<comment type="subunit">
    <text evidence="1">Homohexamer. Forms a ring that surrounds DNA (By similarity).</text>
</comment>
<comment type="subcellular location">
    <subcellularLocation>
        <location evidence="1">Cell inner membrane</location>
        <topology evidence="1">Multi-pass membrane protein</topology>
    </subcellularLocation>
    <text evidence="1">Located at the septum.</text>
</comment>
<comment type="domain">
    <text evidence="1">Consists of an N-terminal domain, which is sufficient for the localization to the septal ring and is required for cell division, followed by a linker domain, and a C-terminal domain, which forms the translocation motor involved in chromosome segregation. The C-terminal domain can be further subdivided into alpha, beta and gamma subdomains. The alpha and beta subdomains multimerise to produce a hexameric ring, contain the nucleotide binding motif and form the DNA pump. The gamma subdomain is a regulatory subdomain that controls translocation of DNA by recognition of KOPS motifs and interacts with XerD recombinase (By similarity).</text>
</comment>
<comment type="similarity">
    <text evidence="4">Belongs to the FtsK/SpoIIIE/SftA family.</text>
</comment>
<accession>Q92G50</accession>
<reference key="1">
    <citation type="journal article" date="2001" name="Science">
        <title>Mechanisms of evolution in Rickettsia conorii and R. prowazekii.</title>
        <authorList>
            <person name="Ogata H."/>
            <person name="Audic S."/>
            <person name="Renesto-Audiffren P."/>
            <person name="Fournier P.-E."/>
            <person name="Barbe V."/>
            <person name="Samson D."/>
            <person name="Roux V."/>
            <person name="Cossart P."/>
            <person name="Weissenbach J."/>
            <person name="Claverie J.-M."/>
            <person name="Raoult D."/>
        </authorList>
    </citation>
    <scope>NUCLEOTIDE SEQUENCE [LARGE SCALE GENOMIC DNA]</scope>
    <source>
        <strain>ATCC VR-613 / Malish 7</strain>
    </source>
</reference>
<sequence length="744" mass="82916">MLYYINKILSNNKVQAVILGIIGLGIVIVLTSYNIDDPSFNSVTTEYHSNLVGIFGSYLSDCLYQFFGLAAFIIPLACFVWGRNCWYGRYRGSFIRMFVMLLALVSSSTLLSKIKLEFIPANAGGAIGIIASNFFERFTNQLYLLLIFFTFIILVVLFEIKFTSLSNFIIKLGNFLIYRIQSFLHNVFSRLSSIRLFPTKNNDKINITSSYQKPVSEKVKFPEEARSVPANPIKFFSKPVSPKISQSEIAELPPISLLRDPEKHHVKGASSLELKQKAEELLTVLNDFGVKGQIININQGPVVTQYEFEPAAGTKTSRVVGLSDDIARSLSALSTRIAVIPGKNVLGIELPNKQREFFCLKELIETPEYQDKSTLLPLVLGKDLAGKPLVADLAKMPHLLVAGTTGSGKSVGINVMIVSLLYRYTPEECRFIMIDPKMLELSAYDGIPHLLTPVVTEPSKAVVALKWAVKEMENRYRMMSNIGVKNIAGYNAKILEAVKENRIIERSIQTGFDPETGKPIYETVTMKMEKLPYIVVIVDEMADLMLVAGKDIEMLIQRLAQMARAAGIHIIMATQRPSVDVITGVIKANFPSRISFKVTSKIDSRTILGEQGSEQLLGMGDMLFMGSTSKISRVHGPFVNEAEIEQITEYLKESGTPEYISAVTEQPEEDDSGIDIGDGTSDEVLYKKAVQIVRDERKSSISYIQRSLRIGYNKAANLVEKMEKEGIVSPPNHTGKREILLPER</sequence>
<dbReference type="EMBL" id="AE006914">
    <property type="protein sequence ID" value="AAL03812.1"/>
    <property type="molecule type" value="Genomic_DNA"/>
</dbReference>
<dbReference type="PIR" id="B97859">
    <property type="entry name" value="B97859"/>
</dbReference>
<dbReference type="RefSeq" id="WP_010977836.1">
    <property type="nucleotide sequence ID" value="NC_003103.1"/>
</dbReference>
<dbReference type="SMR" id="Q92G50"/>
<dbReference type="GeneID" id="928426"/>
<dbReference type="KEGG" id="rco:RC1274"/>
<dbReference type="PATRIC" id="fig|272944.4.peg.1465"/>
<dbReference type="HOGENOM" id="CLU_001981_9_7_5"/>
<dbReference type="Proteomes" id="UP000000816">
    <property type="component" value="Chromosome"/>
</dbReference>
<dbReference type="GO" id="GO:0005886">
    <property type="term" value="C:plasma membrane"/>
    <property type="evidence" value="ECO:0007669"/>
    <property type="project" value="UniProtKB-SubCell"/>
</dbReference>
<dbReference type="GO" id="GO:0005524">
    <property type="term" value="F:ATP binding"/>
    <property type="evidence" value="ECO:0007669"/>
    <property type="project" value="UniProtKB-KW"/>
</dbReference>
<dbReference type="GO" id="GO:0003677">
    <property type="term" value="F:DNA binding"/>
    <property type="evidence" value="ECO:0007669"/>
    <property type="project" value="UniProtKB-KW"/>
</dbReference>
<dbReference type="GO" id="GO:0051301">
    <property type="term" value="P:cell division"/>
    <property type="evidence" value="ECO:0007669"/>
    <property type="project" value="UniProtKB-KW"/>
</dbReference>
<dbReference type="GO" id="GO:0007059">
    <property type="term" value="P:chromosome segregation"/>
    <property type="evidence" value="ECO:0007669"/>
    <property type="project" value="UniProtKB-KW"/>
</dbReference>
<dbReference type="Gene3D" id="3.30.980.40">
    <property type="match status" value="1"/>
</dbReference>
<dbReference type="Gene3D" id="3.40.50.300">
    <property type="entry name" value="P-loop containing nucleotide triphosphate hydrolases"/>
    <property type="match status" value="1"/>
</dbReference>
<dbReference type="Gene3D" id="1.10.10.10">
    <property type="entry name" value="Winged helix-like DNA-binding domain superfamily/Winged helix DNA-binding domain"/>
    <property type="match status" value="1"/>
</dbReference>
<dbReference type="InterPro" id="IPR050206">
    <property type="entry name" value="FtsK/SpoIIIE/SftA"/>
</dbReference>
<dbReference type="InterPro" id="IPR025199">
    <property type="entry name" value="FtsK_4TM"/>
</dbReference>
<dbReference type="InterPro" id="IPR041027">
    <property type="entry name" value="FtsK_alpha"/>
</dbReference>
<dbReference type="InterPro" id="IPR002543">
    <property type="entry name" value="FtsK_dom"/>
</dbReference>
<dbReference type="InterPro" id="IPR018541">
    <property type="entry name" value="Ftsk_gamma"/>
</dbReference>
<dbReference type="InterPro" id="IPR027417">
    <property type="entry name" value="P-loop_NTPase"/>
</dbReference>
<dbReference type="InterPro" id="IPR036388">
    <property type="entry name" value="WH-like_DNA-bd_sf"/>
</dbReference>
<dbReference type="InterPro" id="IPR036390">
    <property type="entry name" value="WH_DNA-bd_sf"/>
</dbReference>
<dbReference type="PANTHER" id="PTHR22683:SF41">
    <property type="entry name" value="DNA TRANSLOCASE FTSK"/>
    <property type="match status" value="1"/>
</dbReference>
<dbReference type="PANTHER" id="PTHR22683">
    <property type="entry name" value="SPORULATION PROTEIN RELATED"/>
    <property type="match status" value="1"/>
</dbReference>
<dbReference type="Pfam" id="PF13491">
    <property type="entry name" value="FtsK_4TM"/>
    <property type="match status" value="1"/>
</dbReference>
<dbReference type="Pfam" id="PF17854">
    <property type="entry name" value="FtsK_alpha"/>
    <property type="match status" value="1"/>
</dbReference>
<dbReference type="Pfam" id="PF09397">
    <property type="entry name" value="FtsK_gamma"/>
    <property type="match status" value="1"/>
</dbReference>
<dbReference type="Pfam" id="PF01580">
    <property type="entry name" value="FtsK_SpoIIIE"/>
    <property type="match status" value="1"/>
</dbReference>
<dbReference type="SMART" id="SM00843">
    <property type="entry name" value="Ftsk_gamma"/>
    <property type="match status" value="1"/>
</dbReference>
<dbReference type="SUPFAM" id="SSF52540">
    <property type="entry name" value="P-loop containing nucleoside triphosphate hydrolases"/>
    <property type="match status" value="1"/>
</dbReference>
<dbReference type="SUPFAM" id="SSF46785">
    <property type="entry name" value="Winged helix' DNA-binding domain"/>
    <property type="match status" value="1"/>
</dbReference>
<dbReference type="PROSITE" id="PS50901">
    <property type="entry name" value="FTSK"/>
    <property type="match status" value="1"/>
</dbReference>